<name>H8C01_CYRHA</name>
<sequence length="77" mass="9054">TFAGLVLLFVVCYASESEEKEFPKEMLSSIFAVDNDFKQEERDCAGYMRECKEKLCCSGYVRSSRWKWCVLPAPWRR</sequence>
<accession>D2Y245</accession>
<evidence type="ECO:0000250" key="1"/>
<evidence type="ECO:0000250" key="2">
    <source>
        <dbReference type="UniProtKB" id="B3FIS6"/>
    </source>
</evidence>
<evidence type="ECO:0000255" key="3"/>
<evidence type="ECO:0000305" key="4"/>
<proteinExistence type="evidence at transcript level"/>
<comment type="function">
    <text evidence="1">Ion channel inhibitor.</text>
</comment>
<comment type="subcellular location">
    <subcellularLocation>
        <location evidence="1">Secreted</location>
    </subcellularLocation>
</comment>
<comment type="tissue specificity">
    <text>Expressed by the venom gland.</text>
</comment>
<comment type="domain">
    <text evidence="1">The presence of a 'disulfide through disulfide knot' structurally defines this protein as a knottin.</text>
</comment>
<comment type="similarity">
    <text evidence="4">Belongs to the neurotoxin 10 (Hwtx-1) family. 51 (Hntx-8) subfamily. Hntx-8 sub-subfamily.</text>
</comment>
<comment type="caution">
    <text evidence="4">While it is structurally defined as a knottin it lacks the conserved Cys residue in position 62.</text>
</comment>
<comment type="sequence caution" evidence="4">
    <conflict type="erroneous initiation">
        <sequence resource="EMBL-CDS" id="ADB56738"/>
    </conflict>
    <text>Truncated N-terminus.</text>
</comment>
<dbReference type="EMBL" id="GU292922">
    <property type="protein sequence ID" value="ADB56738.1"/>
    <property type="status" value="ALT_INIT"/>
    <property type="molecule type" value="mRNA"/>
</dbReference>
<dbReference type="SMR" id="D2Y245"/>
<dbReference type="ArachnoServer" id="AS001931">
    <property type="toxin name" value="U3-theraphotoxin-Hhn1k"/>
</dbReference>
<dbReference type="GO" id="GO:0005576">
    <property type="term" value="C:extracellular region"/>
    <property type="evidence" value="ECO:0007669"/>
    <property type="project" value="UniProtKB-SubCell"/>
</dbReference>
<dbReference type="GO" id="GO:0008200">
    <property type="term" value="F:ion channel inhibitor activity"/>
    <property type="evidence" value="ECO:0007669"/>
    <property type="project" value="InterPro"/>
</dbReference>
<dbReference type="GO" id="GO:0090729">
    <property type="term" value="F:toxin activity"/>
    <property type="evidence" value="ECO:0007669"/>
    <property type="project" value="UniProtKB-KW"/>
</dbReference>
<dbReference type="InterPro" id="IPR011696">
    <property type="entry name" value="Huwentoxin-1"/>
</dbReference>
<dbReference type="Pfam" id="PF07740">
    <property type="entry name" value="Toxin_12"/>
    <property type="match status" value="1"/>
</dbReference>
<dbReference type="SUPFAM" id="SSF57059">
    <property type="entry name" value="omega toxin-like"/>
    <property type="match status" value="1"/>
</dbReference>
<reference key="1">
    <citation type="journal article" date="2010" name="J. Proteome Res.">
        <title>Molecular diversification of peptide toxins from the tarantula Haplopelma hainanum (Ornithoctonus hainana) venom based on transcriptomic, peptidomic, and genomic analyses.</title>
        <authorList>
            <person name="Tang X."/>
            <person name="Zhang Y."/>
            <person name="Hu W."/>
            <person name="Xu D."/>
            <person name="Tao H."/>
            <person name="Yang X."/>
            <person name="Li Y."/>
            <person name="Jiang L."/>
            <person name="Liang S."/>
        </authorList>
    </citation>
    <scope>NUCLEOTIDE SEQUENCE [LARGE SCALE MRNA]</scope>
    <source>
        <tissue>Venom gland</tissue>
    </source>
</reference>
<protein>
    <recommendedName>
        <fullName>U3-theraphotoxin-Hhn1k</fullName>
        <shortName>U3-TRTX-Hhn1k</shortName>
    </recommendedName>
    <alternativeName>
        <fullName>Hainantoxin-VIII-3</fullName>
        <shortName>HNTX-VIII-3</shortName>
    </alternativeName>
</protein>
<keyword id="KW-1015">Disulfide bond</keyword>
<keyword id="KW-0872">Ion channel impairing toxin</keyword>
<keyword id="KW-0960">Knottin</keyword>
<keyword id="KW-0964">Secreted</keyword>
<keyword id="KW-0732">Signal</keyword>
<keyword id="KW-0800">Toxin</keyword>
<feature type="signal peptide" evidence="3">
    <location>
        <begin position="1" status="less than"/>
        <end position="14"/>
    </location>
</feature>
<feature type="propeptide" id="PRO_0000400619" evidence="1">
    <location>
        <begin position="15"/>
        <end position="42"/>
    </location>
</feature>
<feature type="peptide" id="PRO_0000400620" description="U3-theraphotoxin-Hhn1k">
    <location>
        <begin position="43"/>
        <end position="77"/>
    </location>
</feature>
<feature type="disulfide bond" evidence="2">
    <location>
        <begin position="44"/>
        <end position="57"/>
    </location>
</feature>
<feature type="disulfide bond" evidence="2">
    <location>
        <begin position="56"/>
        <end position="69"/>
    </location>
</feature>
<feature type="non-terminal residue">
    <location>
        <position position="1"/>
    </location>
</feature>
<organism>
    <name type="scientific">Cyriopagopus hainanus</name>
    <name type="common">Chinese bird spider</name>
    <name type="synonym">Haplopelma hainanum</name>
    <dbReference type="NCBI Taxonomy" id="209901"/>
    <lineage>
        <taxon>Eukaryota</taxon>
        <taxon>Metazoa</taxon>
        <taxon>Ecdysozoa</taxon>
        <taxon>Arthropoda</taxon>
        <taxon>Chelicerata</taxon>
        <taxon>Arachnida</taxon>
        <taxon>Araneae</taxon>
        <taxon>Mygalomorphae</taxon>
        <taxon>Theraphosidae</taxon>
        <taxon>Haplopelma</taxon>
    </lineage>
</organism>